<dbReference type="EMBL" id="CP001616">
    <property type="protein sequence ID" value="ACQ91786.1"/>
    <property type="molecule type" value="Genomic_DNA"/>
</dbReference>
<dbReference type="RefSeq" id="WP_012728385.1">
    <property type="nucleotide sequence ID" value="NC_012691.1"/>
</dbReference>
<dbReference type="SMR" id="C4L7Y7"/>
<dbReference type="STRING" id="595494.Tola_0156"/>
<dbReference type="KEGG" id="tau:Tola_0156"/>
<dbReference type="eggNOG" id="COG2922">
    <property type="taxonomic scope" value="Bacteria"/>
</dbReference>
<dbReference type="HOGENOM" id="CLU_133242_0_0_6"/>
<dbReference type="OrthoDB" id="9788984at2"/>
<dbReference type="Proteomes" id="UP000009073">
    <property type="component" value="Chromosome"/>
</dbReference>
<dbReference type="HAMAP" id="MF_00598">
    <property type="entry name" value="Smg"/>
    <property type="match status" value="1"/>
</dbReference>
<dbReference type="InterPro" id="IPR007456">
    <property type="entry name" value="Smg"/>
</dbReference>
<dbReference type="NCBIfam" id="NF002897">
    <property type="entry name" value="PRK03430.1"/>
    <property type="match status" value="1"/>
</dbReference>
<dbReference type="PANTHER" id="PTHR38692">
    <property type="entry name" value="PROTEIN SMG"/>
    <property type="match status" value="1"/>
</dbReference>
<dbReference type="PANTHER" id="PTHR38692:SF1">
    <property type="entry name" value="PROTEIN SMG"/>
    <property type="match status" value="1"/>
</dbReference>
<dbReference type="Pfam" id="PF04361">
    <property type="entry name" value="DUF494"/>
    <property type="match status" value="1"/>
</dbReference>
<feature type="chain" id="PRO_1000212185" description="Protein Smg homolog">
    <location>
        <begin position="1"/>
        <end position="157"/>
    </location>
</feature>
<keyword id="KW-1185">Reference proteome</keyword>
<organism>
    <name type="scientific">Tolumonas auensis (strain DSM 9187 / NBRC 110442 / TA 4)</name>
    <dbReference type="NCBI Taxonomy" id="595494"/>
    <lineage>
        <taxon>Bacteria</taxon>
        <taxon>Pseudomonadati</taxon>
        <taxon>Pseudomonadota</taxon>
        <taxon>Gammaproteobacteria</taxon>
        <taxon>Aeromonadales</taxon>
        <taxon>Aeromonadaceae</taxon>
        <taxon>Tolumonas</taxon>
    </lineage>
</organism>
<gene>
    <name evidence="1" type="primary">smg</name>
    <name type="ordered locus">Tola_0156</name>
</gene>
<evidence type="ECO:0000255" key="1">
    <source>
        <dbReference type="HAMAP-Rule" id="MF_00598"/>
    </source>
</evidence>
<name>SMG_TOLAT</name>
<comment type="similarity">
    <text evidence="1">Belongs to the Smg family.</text>
</comment>
<proteinExistence type="inferred from homology"/>
<accession>C4L7Y7</accession>
<protein>
    <recommendedName>
        <fullName evidence="1">Protein Smg homolog</fullName>
    </recommendedName>
</protein>
<reference key="1">
    <citation type="submission" date="2009-05" db="EMBL/GenBank/DDBJ databases">
        <title>Complete sequence of Tolumonas auensis DSM 9187.</title>
        <authorList>
            <consortium name="US DOE Joint Genome Institute"/>
            <person name="Lucas S."/>
            <person name="Copeland A."/>
            <person name="Lapidus A."/>
            <person name="Glavina del Rio T."/>
            <person name="Tice H."/>
            <person name="Bruce D."/>
            <person name="Goodwin L."/>
            <person name="Pitluck S."/>
            <person name="Chertkov O."/>
            <person name="Brettin T."/>
            <person name="Detter J.C."/>
            <person name="Han C."/>
            <person name="Larimer F."/>
            <person name="Land M."/>
            <person name="Hauser L."/>
            <person name="Kyrpides N."/>
            <person name="Mikhailova N."/>
            <person name="Spring S."/>
            <person name="Beller H."/>
        </authorList>
    </citation>
    <scope>NUCLEOTIDE SEQUENCE [LARGE SCALE GENOMIC DNA]</scope>
    <source>
        <strain>DSM 9187 / NBRC 110442 / TA 4</strain>
    </source>
</reference>
<sequence length="157" mass="18268">MFDVLMYLFETYVQSELDFMVDQDALTDELTRAGFQKPEIYKALSWLEQLAALHDSEDAPEYTACASDSFRIYASEEMLKLSTECRGFLLFLEQIRVLNCDTREIVIERLMELDSPEIELDDLKWVVMMVLFNLPGGENACHQMEELMFEPEAITIQ</sequence>